<evidence type="ECO:0000250" key="1">
    <source>
        <dbReference type="UniProtKB" id="P01514"/>
    </source>
</evidence>
<evidence type="ECO:0000250" key="2">
    <source>
        <dbReference type="UniProtKB" id="P07496"/>
    </source>
</evidence>
<evidence type="ECO:0000250" key="3">
    <source>
        <dbReference type="UniProtKB" id="P84914"/>
    </source>
</evidence>
<evidence type="ECO:0000269" key="4">
    <source>
    </source>
</evidence>
<evidence type="ECO:0000303" key="5">
    <source>
    </source>
</evidence>
<evidence type="ECO:0000305" key="6"/>
<evidence type="ECO:0000305" key="7">
    <source>
    </source>
</evidence>
<reference key="1">
    <citation type="journal article" date="2006" name="Toxicon">
        <title>Mass spectrometry strategies for venom mapping and peptide sequencing from crude venoms: case applications with single arthropod specimen.</title>
        <authorList>
            <person name="Favreau P."/>
            <person name="Menin L."/>
            <person name="Michalet S."/>
            <person name="Perret F."/>
            <person name="Cheneval O."/>
            <person name="Stocklin M."/>
            <person name="Bulet P."/>
            <person name="Stocklin R."/>
        </authorList>
    </citation>
    <scope>PROTEIN SEQUENCE</scope>
    <scope>SUBCELLULAR LOCATION</scope>
    <scope>MASS SPECTROMETRY</scope>
    <source>
        <tissue>Venom</tissue>
    </source>
</reference>
<name>BOL6_BOMLA</name>
<keyword id="KW-0044">Antibiotic</keyword>
<keyword id="KW-0929">Antimicrobial</keyword>
<keyword id="KW-0903">Direct protein sequencing</keyword>
<keyword id="KW-0295">Fungicide</keyword>
<keyword id="KW-1213">G-protein coupled receptor impairing toxin</keyword>
<keyword id="KW-0391">Immunity</keyword>
<keyword id="KW-0399">Innate immunity</keyword>
<keyword id="KW-0467">Mast cell degranulation</keyword>
<keyword id="KW-0964">Secreted</keyword>
<keyword id="KW-0800">Toxin</keyword>
<sequence>LNLTKWLGKLGVILSHLNK</sequence>
<comment type="function">
    <text evidence="1 2 3">Mast cell degranulating peptide. May also display antibacterial and antifungal activities (By similarity). Its mast cell degranulation activity may be related to the activation of G-protein coupled receptors in mast cells as well as interaction with other proteins located in cell endosomal membranes in the mast cells (By similarity).</text>
</comment>
<comment type="subcellular location">
    <subcellularLocation>
        <location evidence="4">Secreted</location>
    </subcellularLocation>
</comment>
<comment type="tissue specificity">
    <text evidence="7">Expressed by the venom gland.</text>
</comment>
<comment type="mass spectrometry"/>
<comment type="similarity">
    <text evidence="6">Belongs to the MCD family. Bombolitin subfamily.</text>
</comment>
<dbReference type="GO" id="GO:0005576">
    <property type="term" value="C:extracellular region"/>
    <property type="evidence" value="ECO:0007669"/>
    <property type="project" value="UniProtKB-SubCell"/>
</dbReference>
<dbReference type="GO" id="GO:0090729">
    <property type="term" value="F:toxin activity"/>
    <property type="evidence" value="ECO:0007669"/>
    <property type="project" value="UniProtKB-KW"/>
</dbReference>
<dbReference type="GO" id="GO:0042742">
    <property type="term" value="P:defense response to bacterium"/>
    <property type="evidence" value="ECO:0007669"/>
    <property type="project" value="UniProtKB-KW"/>
</dbReference>
<dbReference type="GO" id="GO:0050832">
    <property type="term" value="P:defense response to fungus"/>
    <property type="evidence" value="ECO:0007669"/>
    <property type="project" value="UniProtKB-KW"/>
</dbReference>
<dbReference type="GO" id="GO:0045087">
    <property type="term" value="P:innate immune response"/>
    <property type="evidence" value="ECO:0007669"/>
    <property type="project" value="UniProtKB-KW"/>
</dbReference>
<dbReference type="GO" id="GO:0031640">
    <property type="term" value="P:killing of cells of another organism"/>
    <property type="evidence" value="ECO:0007669"/>
    <property type="project" value="UniProtKB-KW"/>
</dbReference>
<organism>
    <name type="scientific">Bombus lapidarius</name>
    <name type="common">Red-tailed bumblebee</name>
    <name type="synonym">Apis lapidaria</name>
    <dbReference type="NCBI Taxonomy" id="30192"/>
    <lineage>
        <taxon>Eukaryota</taxon>
        <taxon>Metazoa</taxon>
        <taxon>Ecdysozoa</taxon>
        <taxon>Arthropoda</taxon>
        <taxon>Hexapoda</taxon>
        <taxon>Insecta</taxon>
        <taxon>Pterygota</taxon>
        <taxon>Neoptera</taxon>
        <taxon>Endopterygota</taxon>
        <taxon>Hymenoptera</taxon>
        <taxon>Apocrita</taxon>
        <taxon>Aculeata</taxon>
        <taxon>Apoidea</taxon>
        <taxon>Anthophila</taxon>
        <taxon>Apidae</taxon>
        <taxon>Bombus</taxon>
        <taxon>Melanobombus</taxon>
    </lineage>
</organism>
<proteinExistence type="evidence at protein level"/>
<accession>P0CD67</accession>
<protein>
    <recommendedName>
        <fullName evidence="5">Bombolitin-6</fullName>
    </recommendedName>
</protein>
<feature type="peptide" id="PRO_0000391361" description="Bombolitin-6" evidence="4">
    <location>
        <begin position="1"/>
        <end position="19"/>
    </location>
</feature>